<comment type="function">
    <text evidence="1 2">Cilium- and flagellum-specific protein that plays a role in axonemal structure organization and motility (PubMed:24414207). Microtubule inner protein (MIP) part of the dynein-decorated doublet microtubules (DMTs) in cilia axoneme, which is required for motile cilia beating (By similarity). Involved in the regulation of the size and morphology of cilia. Required for sperm individualization, differentiation of the sperm flagellum and tubulin polyglycylation of axonemal microtubules.</text>
</comment>
<comment type="interaction">
    <interactant intactId="EBI-163082">
        <id>Q9VKV8</id>
    </interactant>
    <interactant intactId="EBI-142568">
        <id>P12297</id>
        <label>su(w[a])</label>
    </interactant>
    <organismsDiffer>false</organismsDiffer>
    <experiments>3</experiments>
</comment>
<comment type="subcellular location">
    <subcellularLocation>
        <location evidence="2">Nucleus</location>
    </subcellularLocation>
    <subcellularLocation>
        <location evidence="2">Nucleus</location>
        <location evidence="2">Nucleolus</location>
    </subcellularLocation>
    <subcellularLocation>
        <location evidence="2">Cell projection</location>
        <location evidence="2">Cilium</location>
    </subcellularLocation>
    <subcellularLocation>
        <location evidence="2">Cytoplasm</location>
        <location evidence="2">Cytoskeleton</location>
        <location evidence="2">Microtubule organizing center</location>
        <location evidence="2">Centrosome</location>
        <location evidence="2">Centriole</location>
    </subcellularLocation>
    <subcellularLocation>
        <location evidence="2">Cell projection</location>
        <location evidence="2">Cilium</location>
        <location evidence="2">Flagellum</location>
    </subcellularLocation>
    <subcellularLocation>
        <location evidence="1">Cytoplasm</location>
        <location evidence="1">Cytoskeleton</location>
        <location evidence="1">Cilium axoneme</location>
    </subcellularLocation>
    <text>Localizes in cilia of chordotonal organs in sensory neurons of the antenna. Localizes in small primary cilium composed of a transition zone and a short axoneme. Localizes at the top of the giant centrioles and enriched in the nucleolus of spermatocytes.</text>
</comment>
<comment type="tissue specificity">
    <text evidence="2">Expressed in spermatocytes and chordotonal organs in sensory neurons of the antenna.</text>
</comment>
<comment type="disruption phenotype">
    <text evidence="2">Flies are viable and develop until late pupal stages. Display defects in wing posture and inflation, in locomotion and climbing activities and have a reduced lifespan. Males produce immotile sperm and show defects in sperm individualization process within cysts. Display defects of polyglycylation incorporation in sperm axonemal microtubules.</text>
</comment>
<comment type="similarity">
    <text evidence="3">Belongs to the CFAP20 family.</text>
</comment>
<evidence type="ECO:0000250" key="1">
    <source>
        <dbReference type="UniProtKB" id="Q9Y6A4"/>
    </source>
</evidence>
<evidence type="ECO:0000269" key="2">
    <source>
    </source>
</evidence>
<evidence type="ECO:0000305" key="3"/>
<evidence type="ECO:0000312" key="4">
    <source>
        <dbReference type="FlyBase" id="FBgn0032248"/>
    </source>
</evidence>
<organism>
    <name type="scientific">Drosophila melanogaster</name>
    <name type="common">Fruit fly</name>
    <dbReference type="NCBI Taxonomy" id="7227"/>
    <lineage>
        <taxon>Eukaryota</taxon>
        <taxon>Metazoa</taxon>
        <taxon>Ecdysozoa</taxon>
        <taxon>Arthropoda</taxon>
        <taxon>Hexapoda</taxon>
        <taxon>Insecta</taxon>
        <taxon>Pterygota</taxon>
        <taxon>Neoptera</taxon>
        <taxon>Endopterygota</taxon>
        <taxon>Diptera</taxon>
        <taxon>Brachycera</taxon>
        <taxon>Muscomorpha</taxon>
        <taxon>Ephydroidea</taxon>
        <taxon>Drosophilidae</taxon>
        <taxon>Drosophila</taxon>
        <taxon>Sophophora</taxon>
    </lineage>
</organism>
<reference key="1">
    <citation type="journal article" date="2000" name="Science">
        <title>The genome sequence of Drosophila melanogaster.</title>
        <authorList>
            <person name="Adams M.D."/>
            <person name="Celniker S.E."/>
            <person name="Holt R.A."/>
            <person name="Evans C.A."/>
            <person name="Gocayne J.D."/>
            <person name="Amanatides P.G."/>
            <person name="Scherer S.E."/>
            <person name="Li P.W."/>
            <person name="Hoskins R.A."/>
            <person name="Galle R.F."/>
            <person name="George R.A."/>
            <person name="Lewis S.E."/>
            <person name="Richards S."/>
            <person name="Ashburner M."/>
            <person name="Henderson S.N."/>
            <person name="Sutton G.G."/>
            <person name="Wortman J.R."/>
            <person name="Yandell M.D."/>
            <person name="Zhang Q."/>
            <person name="Chen L.X."/>
            <person name="Brandon R.C."/>
            <person name="Rogers Y.-H.C."/>
            <person name="Blazej R.G."/>
            <person name="Champe M."/>
            <person name="Pfeiffer B.D."/>
            <person name="Wan K.H."/>
            <person name="Doyle C."/>
            <person name="Baxter E.G."/>
            <person name="Helt G."/>
            <person name="Nelson C.R."/>
            <person name="Miklos G.L.G."/>
            <person name="Abril J.F."/>
            <person name="Agbayani A."/>
            <person name="An H.-J."/>
            <person name="Andrews-Pfannkoch C."/>
            <person name="Baldwin D."/>
            <person name="Ballew R.M."/>
            <person name="Basu A."/>
            <person name="Baxendale J."/>
            <person name="Bayraktaroglu L."/>
            <person name="Beasley E.M."/>
            <person name="Beeson K.Y."/>
            <person name="Benos P.V."/>
            <person name="Berman B.P."/>
            <person name="Bhandari D."/>
            <person name="Bolshakov S."/>
            <person name="Borkova D."/>
            <person name="Botchan M.R."/>
            <person name="Bouck J."/>
            <person name="Brokstein P."/>
            <person name="Brottier P."/>
            <person name="Burtis K.C."/>
            <person name="Busam D.A."/>
            <person name="Butler H."/>
            <person name="Cadieu E."/>
            <person name="Center A."/>
            <person name="Chandra I."/>
            <person name="Cherry J.M."/>
            <person name="Cawley S."/>
            <person name="Dahlke C."/>
            <person name="Davenport L.B."/>
            <person name="Davies P."/>
            <person name="de Pablos B."/>
            <person name="Delcher A."/>
            <person name="Deng Z."/>
            <person name="Mays A.D."/>
            <person name="Dew I."/>
            <person name="Dietz S.M."/>
            <person name="Dodson K."/>
            <person name="Doup L.E."/>
            <person name="Downes M."/>
            <person name="Dugan-Rocha S."/>
            <person name="Dunkov B.C."/>
            <person name="Dunn P."/>
            <person name="Durbin K.J."/>
            <person name="Evangelista C.C."/>
            <person name="Ferraz C."/>
            <person name="Ferriera S."/>
            <person name="Fleischmann W."/>
            <person name="Fosler C."/>
            <person name="Gabrielian A.E."/>
            <person name="Garg N.S."/>
            <person name="Gelbart W.M."/>
            <person name="Glasser K."/>
            <person name="Glodek A."/>
            <person name="Gong F."/>
            <person name="Gorrell J.H."/>
            <person name="Gu Z."/>
            <person name="Guan P."/>
            <person name="Harris M."/>
            <person name="Harris N.L."/>
            <person name="Harvey D.A."/>
            <person name="Heiman T.J."/>
            <person name="Hernandez J.R."/>
            <person name="Houck J."/>
            <person name="Hostin D."/>
            <person name="Houston K.A."/>
            <person name="Howland T.J."/>
            <person name="Wei M.-H."/>
            <person name="Ibegwam C."/>
            <person name="Jalali M."/>
            <person name="Kalush F."/>
            <person name="Karpen G.H."/>
            <person name="Ke Z."/>
            <person name="Kennison J.A."/>
            <person name="Ketchum K.A."/>
            <person name="Kimmel B.E."/>
            <person name="Kodira C.D."/>
            <person name="Kraft C.L."/>
            <person name="Kravitz S."/>
            <person name="Kulp D."/>
            <person name="Lai Z."/>
            <person name="Lasko P."/>
            <person name="Lei Y."/>
            <person name="Levitsky A.A."/>
            <person name="Li J.H."/>
            <person name="Li Z."/>
            <person name="Liang Y."/>
            <person name="Lin X."/>
            <person name="Liu X."/>
            <person name="Mattei B."/>
            <person name="McIntosh T.C."/>
            <person name="McLeod M.P."/>
            <person name="McPherson D."/>
            <person name="Merkulov G."/>
            <person name="Milshina N.V."/>
            <person name="Mobarry C."/>
            <person name="Morris J."/>
            <person name="Moshrefi A."/>
            <person name="Mount S.M."/>
            <person name="Moy M."/>
            <person name="Murphy B."/>
            <person name="Murphy L."/>
            <person name="Muzny D.M."/>
            <person name="Nelson D.L."/>
            <person name="Nelson D.R."/>
            <person name="Nelson K.A."/>
            <person name="Nixon K."/>
            <person name="Nusskern D.R."/>
            <person name="Pacleb J.M."/>
            <person name="Palazzolo M."/>
            <person name="Pittman G.S."/>
            <person name="Pan S."/>
            <person name="Pollard J."/>
            <person name="Puri V."/>
            <person name="Reese M.G."/>
            <person name="Reinert K."/>
            <person name="Remington K."/>
            <person name="Saunders R.D.C."/>
            <person name="Scheeler F."/>
            <person name="Shen H."/>
            <person name="Shue B.C."/>
            <person name="Siden-Kiamos I."/>
            <person name="Simpson M."/>
            <person name="Skupski M.P."/>
            <person name="Smith T.J."/>
            <person name="Spier E."/>
            <person name="Spradling A.C."/>
            <person name="Stapleton M."/>
            <person name="Strong R."/>
            <person name="Sun E."/>
            <person name="Svirskas R."/>
            <person name="Tector C."/>
            <person name="Turner R."/>
            <person name="Venter E."/>
            <person name="Wang A.H."/>
            <person name="Wang X."/>
            <person name="Wang Z.-Y."/>
            <person name="Wassarman D.A."/>
            <person name="Weinstock G.M."/>
            <person name="Weissenbach J."/>
            <person name="Williams S.M."/>
            <person name="Woodage T."/>
            <person name="Worley K.C."/>
            <person name="Wu D."/>
            <person name="Yang S."/>
            <person name="Yao Q.A."/>
            <person name="Ye J."/>
            <person name="Yeh R.-F."/>
            <person name="Zaveri J.S."/>
            <person name="Zhan M."/>
            <person name="Zhang G."/>
            <person name="Zhao Q."/>
            <person name="Zheng L."/>
            <person name="Zheng X.H."/>
            <person name="Zhong F.N."/>
            <person name="Zhong W."/>
            <person name="Zhou X."/>
            <person name="Zhu S.C."/>
            <person name="Zhu X."/>
            <person name="Smith H.O."/>
            <person name="Gibbs R.A."/>
            <person name="Myers E.W."/>
            <person name="Rubin G.M."/>
            <person name="Venter J.C."/>
        </authorList>
    </citation>
    <scope>NUCLEOTIDE SEQUENCE [LARGE SCALE GENOMIC DNA]</scope>
    <source>
        <strain>Berkeley</strain>
    </source>
</reference>
<reference key="2">
    <citation type="journal article" date="2002" name="Genome Biol.">
        <title>Annotation of the Drosophila melanogaster euchromatic genome: a systematic review.</title>
        <authorList>
            <person name="Misra S."/>
            <person name="Crosby M.A."/>
            <person name="Mungall C.J."/>
            <person name="Matthews B.B."/>
            <person name="Campbell K.S."/>
            <person name="Hradecky P."/>
            <person name="Huang Y."/>
            <person name="Kaminker J.S."/>
            <person name="Millburn G.H."/>
            <person name="Prochnik S.E."/>
            <person name="Smith C.D."/>
            <person name="Tupy J.L."/>
            <person name="Whitfield E.J."/>
            <person name="Bayraktaroglu L."/>
            <person name="Berman B.P."/>
            <person name="Bettencourt B.R."/>
            <person name="Celniker S.E."/>
            <person name="de Grey A.D.N.J."/>
            <person name="Drysdale R.A."/>
            <person name="Harris N.L."/>
            <person name="Richter J."/>
            <person name="Russo S."/>
            <person name="Schroeder A.J."/>
            <person name="Shu S.Q."/>
            <person name="Stapleton M."/>
            <person name="Yamada C."/>
            <person name="Ashburner M."/>
            <person name="Gelbart W.M."/>
            <person name="Rubin G.M."/>
            <person name="Lewis S.E."/>
        </authorList>
    </citation>
    <scope>GENOME REANNOTATION</scope>
    <source>
        <strain>Berkeley</strain>
    </source>
</reference>
<reference key="3">
    <citation type="journal article" date="2002" name="Genome Biol.">
        <title>A Drosophila full-length cDNA resource.</title>
        <authorList>
            <person name="Stapleton M."/>
            <person name="Carlson J.W."/>
            <person name="Brokstein P."/>
            <person name="Yu C."/>
            <person name="Champe M."/>
            <person name="George R.A."/>
            <person name="Guarin H."/>
            <person name="Kronmiller B."/>
            <person name="Pacleb J.M."/>
            <person name="Park S."/>
            <person name="Wan K.H."/>
            <person name="Rubin G.M."/>
            <person name="Celniker S.E."/>
        </authorList>
    </citation>
    <scope>NUCLEOTIDE SEQUENCE [LARGE SCALE MRNA]</scope>
    <source>
        <strain>Berkeley</strain>
        <tissue>Head</tissue>
    </source>
</reference>
<reference key="4">
    <citation type="journal article" date="2014" name="Biol. Open">
        <title>Bug22 influences cilium morphology and the post-translational modification of ciliary microtubules.</title>
        <authorList>
            <person name="Mendes Maia T."/>
            <person name="Gogendeau D."/>
            <person name="Pennetier C."/>
            <person name="Janke C."/>
            <person name="Basto R."/>
        </authorList>
    </citation>
    <scope>FUNCTION</scope>
    <scope>SUBCELLULAR LOCATION</scope>
    <scope>TISSUE SPECIFICITY</scope>
    <scope>DISRUPTION PHENOTYPE</scope>
</reference>
<accession>Q9VKV8</accession>
<name>CFA20_DROME</name>
<proteinExistence type="evidence at protein level"/>
<protein>
    <recommendedName>
        <fullName>Cilia- and flagella-associated protein 20</fullName>
    </recommendedName>
    <alternativeName>
        <fullName>Basal body up-regulated protein 22</fullName>
    </alternativeName>
</protein>
<feature type="chain" id="PRO_0000296407" description="Cilia- and flagella-associated protein 20">
    <location>
        <begin position="1"/>
        <end position="199"/>
    </location>
</feature>
<gene>
    <name evidence="4" type="primary">Bug22</name>
    <name type="synonym">CFAP20</name>
    <name evidence="4" type="ORF">CG5343</name>
</gene>
<keyword id="KW-0966">Cell projection</keyword>
<keyword id="KW-0969">Cilium</keyword>
<keyword id="KW-0963">Cytoplasm</keyword>
<keyword id="KW-0206">Cytoskeleton</keyword>
<keyword id="KW-0221">Differentiation</keyword>
<keyword id="KW-0282">Flagellum</keyword>
<keyword id="KW-0493">Microtubule</keyword>
<keyword id="KW-0539">Nucleus</keyword>
<keyword id="KW-1185">Reference proteome</keyword>
<keyword id="KW-0744">Spermatogenesis</keyword>
<sequence>MFKNTFQSGFLSILYSIGSKPLQLWDKKVRNGHIKRITDNDIQSLVLEIVGTNVSTTFITCPADPKKTLGIKLPFLVMIIKNMKKYFTFEVQVLDDKNVRRRFRASNYQSTTRVKPFICTMPMRLDEGWNQIQFNLSDFTRRAYGTNYVETLRVQIHANCRIRRVYFSDRLYSEDELPPEFKLFLPIQKPVQKSNAICS</sequence>
<dbReference type="EMBL" id="AE014134">
    <property type="protein sequence ID" value="AAF52950.1"/>
    <property type="molecule type" value="Genomic_DNA"/>
</dbReference>
<dbReference type="EMBL" id="AY084152">
    <property type="protein sequence ID" value="AAL89890.1"/>
    <property type="molecule type" value="mRNA"/>
</dbReference>
<dbReference type="RefSeq" id="NP_609402.1">
    <property type="nucleotide sequence ID" value="NM_135558.4"/>
</dbReference>
<dbReference type="SMR" id="Q9VKV8"/>
<dbReference type="BioGRID" id="60510">
    <property type="interactions" value="6"/>
</dbReference>
<dbReference type="FunCoup" id="Q9VKV8">
    <property type="interactions" value="965"/>
</dbReference>
<dbReference type="IntAct" id="Q9VKV8">
    <property type="interactions" value="5"/>
</dbReference>
<dbReference type="STRING" id="7227.FBpp0079634"/>
<dbReference type="PaxDb" id="7227-FBpp0079634"/>
<dbReference type="DNASU" id="34429"/>
<dbReference type="EnsemblMetazoa" id="FBtr0080044">
    <property type="protein sequence ID" value="FBpp0079634"/>
    <property type="gene ID" value="FBgn0032248"/>
</dbReference>
<dbReference type="GeneID" id="34429"/>
<dbReference type="KEGG" id="dme:Dmel_CG5343"/>
<dbReference type="UCSC" id="CG5343-RA">
    <property type="organism name" value="d. melanogaster"/>
</dbReference>
<dbReference type="AGR" id="FB:FBgn0032248"/>
<dbReference type="CTD" id="34429"/>
<dbReference type="FlyBase" id="FBgn0032248">
    <property type="gene designation" value="Bug22"/>
</dbReference>
<dbReference type="VEuPathDB" id="VectorBase:FBgn0032248"/>
<dbReference type="eggNOG" id="KOG3213">
    <property type="taxonomic scope" value="Eukaryota"/>
</dbReference>
<dbReference type="GeneTree" id="ENSGT00390000004554"/>
<dbReference type="HOGENOM" id="CLU_060610_1_1_1"/>
<dbReference type="InParanoid" id="Q9VKV8"/>
<dbReference type="OMA" id="TTYISCP"/>
<dbReference type="OrthoDB" id="7486196at2759"/>
<dbReference type="PhylomeDB" id="Q9VKV8"/>
<dbReference type="BioGRID-ORCS" id="34429">
    <property type="hits" value="1 hit in 1 CRISPR screen"/>
</dbReference>
<dbReference type="GenomeRNAi" id="34429"/>
<dbReference type="PRO" id="PR:Q9VKV8"/>
<dbReference type="Proteomes" id="UP000000803">
    <property type="component" value="Chromosome 2L"/>
</dbReference>
<dbReference type="Bgee" id="FBgn0032248">
    <property type="expression patterns" value="Expressed in early-mid elongation-stage spermatid (Drosophila) in testis and 108 other cell types or tissues"/>
</dbReference>
<dbReference type="GO" id="GO:0005879">
    <property type="term" value="C:axonemal microtubule"/>
    <property type="evidence" value="ECO:0000250"/>
    <property type="project" value="UniProtKB"/>
</dbReference>
<dbReference type="GO" id="GO:0071013">
    <property type="term" value="C:catalytic step 2 spliceosome"/>
    <property type="evidence" value="ECO:0007005"/>
    <property type="project" value="FlyBase"/>
</dbReference>
<dbReference type="GO" id="GO:0005814">
    <property type="term" value="C:centriole"/>
    <property type="evidence" value="ECO:0007669"/>
    <property type="project" value="UniProtKB-SubCell"/>
</dbReference>
<dbReference type="GO" id="GO:0036064">
    <property type="term" value="C:ciliary basal body"/>
    <property type="evidence" value="ECO:0000318"/>
    <property type="project" value="GO_Central"/>
</dbReference>
<dbReference type="GO" id="GO:0005929">
    <property type="term" value="C:cilium"/>
    <property type="evidence" value="ECO:0000314"/>
    <property type="project" value="FlyBase"/>
</dbReference>
<dbReference type="GO" id="GO:0031514">
    <property type="term" value="C:motile cilium"/>
    <property type="evidence" value="ECO:0000318"/>
    <property type="project" value="GO_Central"/>
</dbReference>
<dbReference type="GO" id="GO:0005730">
    <property type="term" value="C:nucleolus"/>
    <property type="evidence" value="ECO:0000314"/>
    <property type="project" value="FlyBase"/>
</dbReference>
<dbReference type="GO" id="GO:0005634">
    <property type="term" value="C:nucleus"/>
    <property type="evidence" value="ECO:0000314"/>
    <property type="project" value="FlyBase"/>
</dbReference>
<dbReference type="GO" id="GO:0071011">
    <property type="term" value="C:precatalytic spliceosome"/>
    <property type="evidence" value="ECO:0007005"/>
    <property type="project" value="FlyBase"/>
</dbReference>
<dbReference type="GO" id="GO:0036126">
    <property type="term" value="C:sperm flagellum"/>
    <property type="evidence" value="ECO:0000314"/>
    <property type="project" value="FlyBase"/>
</dbReference>
<dbReference type="GO" id="GO:0060271">
    <property type="term" value="P:cilium assembly"/>
    <property type="evidence" value="ECO:0000315"/>
    <property type="project" value="UniProtKB"/>
</dbReference>
<dbReference type="GO" id="GO:0044782">
    <property type="term" value="P:cilium organization"/>
    <property type="evidence" value="ECO:0000315"/>
    <property type="project" value="FlyBase"/>
</dbReference>
<dbReference type="GO" id="GO:0040011">
    <property type="term" value="P:locomotion"/>
    <property type="evidence" value="ECO:0000315"/>
    <property type="project" value="FlyBase"/>
</dbReference>
<dbReference type="GO" id="GO:0000398">
    <property type="term" value="P:mRNA splicing, via spliceosome"/>
    <property type="evidence" value="ECO:0000305"/>
    <property type="project" value="FlyBase"/>
</dbReference>
<dbReference type="GO" id="GO:2000147">
    <property type="term" value="P:positive regulation of cell motility"/>
    <property type="evidence" value="ECO:0000318"/>
    <property type="project" value="GO_Central"/>
</dbReference>
<dbReference type="GO" id="GO:1902093">
    <property type="term" value="P:positive regulation of flagellated sperm motility"/>
    <property type="evidence" value="ECO:0000315"/>
    <property type="project" value="UniProtKB"/>
</dbReference>
<dbReference type="GO" id="GO:0018094">
    <property type="term" value="P:protein polyglycylation"/>
    <property type="evidence" value="ECO:0000315"/>
    <property type="project" value="UniProtKB"/>
</dbReference>
<dbReference type="GO" id="GO:0060296">
    <property type="term" value="P:regulation of cilium beat frequency involved in ciliary motility"/>
    <property type="evidence" value="ECO:0000318"/>
    <property type="project" value="GO_Central"/>
</dbReference>
<dbReference type="GO" id="GO:0007288">
    <property type="term" value="P:sperm axoneme assembly"/>
    <property type="evidence" value="ECO:0000315"/>
    <property type="project" value="UniProtKB"/>
</dbReference>
<dbReference type="GO" id="GO:0007291">
    <property type="term" value="P:sperm individualization"/>
    <property type="evidence" value="ECO:0000315"/>
    <property type="project" value="FlyBase"/>
</dbReference>
<dbReference type="InterPro" id="IPR040441">
    <property type="entry name" value="CFA20/CFAP20DC"/>
</dbReference>
<dbReference type="InterPro" id="IPR007714">
    <property type="entry name" value="CFA20_dom"/>
</dbReference>
<dbReference type="PANTHER" id="PTHR12458">
    <property type="entry name" value="ORF PROTEIN"/>
    <property type="match status" value="1"/>
</dbReference>
<dbReference type="Pfam" id="PF05018">
    <property type="entry name" value="CFA20_dom"/>
    <property type="match status" value="1"/>
</dbReference>